<feature type="signal peptide" evidence="5">
    <location>
        <begin position="1"/>
        <end position="23"/>
    </location>
</feature>
<feature type="chain" id="PRO_0000034340" description="Metalloproteinase inhibitor 3">
    <location>
        <begin position="24"/>
        <end position="211"/>
    </location>
</feature>
<feature type="domain" description="NTR" evidence="6">
    <location>
        <begin position="24"/>
        <end position="143"/>
    </location>
</feature>
<feature type="region of interest" description="Involved in metalloproteinase-binding" evidence="2">
    <location>
        <begin position="24"/>
        <end position="27"/>
    </location>
</feature>
<feature type="region of interest" description="Involved in metalloproteinase-binding" evidence="2">
    <location>
        <begin position="88"/>
        <end position="89"/>
    </location>
</feature>
<feature type="region of interest" description="Mediates interaction with EFEMP1" evidence="1">
    <location>
        <begin position="105"/>
        <end position="188"/>
    </location>
</feature>
<feature type="binding site" evidence="2">
    <location>
        <position position="24"/>
    </location>
    <ligand>
        <name>Zn(2+)</name>
        <dbReference type="ChEBI" id="CHEBI:29105"/>
        <note>ligand shared with metalloproteinase partner</note>
    </ligand>
</feature>
<feature type="site" description="Involved in metalloproteinase-binding" evidence="2">
    <location>
        <position position="37"/>
    </location>
</feature>
<feature type="glycosylation site" description="N-linked (GlcNAc...) asparagine" evidence="5">
    <location>
        <position position="207"/>
    </location>
</feature>
<feature type="disulfide bond" evidence="6">
    <location>
        <begin position="24"/>
        <end position="91"/>
    </location>
</feature>
<feature type="disulfide bond" evidence="6">
    <location>
        <begin position="26"/>
        <end position="118"/>
    </location>
</feature>
<feature type="disulfide bond" evidence="6">
    <location>
        <begin position="36"/>
        <end position="143"/>
    </location>
</feature>
<feature type="disulfide bond" evidence="6">
    <location>
        <begin position="145"/>
        <end position="192"/>
    </location>
</feature>
<feature type="disulfide bond" evidence="6">
    <location>
        <begin position="150"/>
        <end position="155"/>
    </location>
</feature>
<feature type="disulfide bond" evidence="6">
    <location>
        <begin position="163"/>
        <end position="184"/>
    </location>
</feature>
<accession>Q9TUL9</accession>
<organism>
    <name type="scientific">Equus caballus</name>
    <name type="common">Horse</name>
    <dbReference type="NCBI Taxonomy" id="9796"/>
    <lineage>
        <taxon>Eukaryota</taxon>
        <taxon>Metazoa</taxon>
        <taxon>Chordata</taxon>
        <taxon>Craniata</taxon>
        <taxon>Vertebrata</taxon>
        <taxon>Euteleostomi</taxon>
        <taxon>Mammalia</taxon>
        <taxon>Eutheria</taxon>
        <taxon>Laurasiatheria</taxon>
        <taxon>Perissodactyla</taxon>
        <taxon>Equidae</taxon>
        <taxon>Equus</taxon>
    </lineage>
</organism>
<dbReference type="EMBL" id="AJ243283">
    <property type="protein sequence ID" value="CAB51854.1"/>
    <property type="molecule type" value="mRNA"/>
</dbReference>
<dbReference type="RefSeq" id="NP_001075339.1">
    <property type="nucleotide sequence ID" value="NM_001081870.2"/>
</dbReference>
<dbReference type="SMR" id="Q9TUL9"/>
<dbReference type="FunCoup" id="Q9TUL9">
    <property type="interactions" value="542"/>
</dbReference>
<dbReference type="STRING" id="9796.ENSECAP00000015840"/>
<dbReference type="MEROPS" id="I35.003"/>
<dbReference type="GlyCosmos" id="Q9TUL9">
    <property type="glycosylation" value="1 site, No reported glycans"/>
</dbReference>
<dbReference type="PaxDb" id="9796-ENSECAP00000015840"/>
<dbReference type="Ensembl" id="ENSECAT00000084385.1">
    <property type="protein sequence ID" value="ENSECAP00000075183.1"/>
    <property type="gene ID" value="ENSECAG00000018314.4"/>
</dbReference>
<dbReference type="GeneID" id="100033947"/>
<dbReference type="KEGG" id="ecb:100033947"/>
<dbReference type="CTD" id="7078"/>
<dbReference type="VGNC" id="VGNC:24109">
    <property type="gene designation" value="TIMP3"/>
</dbReference>
<dbReference type="GeneTree" id="ENSGT00940000159601"/>
<dbReference type="HOGENOM" id="CLU_084029_0_0_1"/>
<dbReference type="InParanoid" id="Q9TUL9"/>
<dbReference type="OMA" id="PFGKCET"/>
<dbReference type="OrthoDB" id="6041373at2759"/>
<dbReference type="TreeFam" id="TF317409"/>
<dbReference type="Proteomes" id="UP000002281">
    <property type="component" value="Chromosome 28"/>
</dbReference>
<dbReference type="Bgee" id="ENSECAG00000018314">
    <property type="expression patterns" value="Expressed in articular cartilage of joint and 21 other cell types or tissues"/>
</dbReference>
<dbReference type="GO" id="GO:0005604">
    <property type="term" value="C:basement membrane"/>
    <property type="evidence" value="ECO:0007669"/>
    <property type="project" value="Ensembl"/>
</dbReference>
<dbReference type="GO" id="GO:0031012">
    <property type="term" value="C:extracellular matrix"/>
    <property type="evidence" value="ECO:0000318"/>
    <property type="project" value="GO_Central"/>
</dbReference>
<dbReference type="GO" id="GO:0005615">
    <property type="term" value="C:extracellular space"/>
    <property type="evidence" value="ECO:0000318"/>
    <property type="project" value="GO_Central"/>
</dbReference>
<dbReference type="GO" id="GO:0008191">
    <property type="term" value="F:metalloendopeptidase inhibitor activity"/>
    <property type="evidence" value="ECO:0000318"/>
    <property type="project" value="GO_Central"/>
</dbReference>
<dbReference type="GO" id="GO:0008270">
    <property type="term" value="F:zinc ion binding"/>
    <property type="evidence" value="ECO:0000250"/>
    <property type="project" value="UniProtKB"/>
</dbReference>
<dbReference type="GO" id="GO:0051045">
    <property type="term" value="P:negative regulation of membrane protein ectodomain proteolysis"/>
    <property type="evidence" value="ECO:0000318"/>
    <property type="project" value="GO_Central"/>
</dbReference>
<dbReference type="GO" id="GO:0034097">
    <property type="term" value="P:response to cytokine"/>
    <property type="evidence" value="ECO:0000318"/>
    <property type="project" value="GO_Central"/>
</dbReference>
<dbReference type="GO" id="GO:0009725">
    <property type="term" value="P:response to hormone"/>
    <property type="evidence" value="ECO:0000318"/>
    <property type="project" value="GO_Central"/>
</dbReference>
<dbReference type="CDD" id="cd03585">
    <property type="entry name" value="NTR_TIMP"/>
    <property type="match status" value="1"/>
</dbReference>
<dbReference type="FunFam" id="3.90.370.10:FF:000001">
    <property type="entry name" value="Metalloproteinase inhibitor 3"/>
    <property type="match status" value="1"/>
</dbReference>
<dbReference type="FunFam" id="2.40.50.120:FF:000005">
    <property type="entry name" value="Metalloproteinase inhibitor 3 precursor"/>
    <property type="match status" value="1"/>
</dbReference>
<dbReference type="Gene3D" id="2.40.50.120">
    <property type="match status" value="1"/>
</dbReference>
<dbReference type="Gene3D" id="3.90.370.10">
    <property type="entry name" value="Tissue inhibitor of metalloproteinase-1. Chain B, domain 1"/>
    <property type="match status" value="1"/>
</dbReference>
<dbReference type="InterPro" id="IPR001134">
    <property type="entry name" value="Netrin_domain"/>
</dbReference>
<dbReference type="InterPro" id="IPR001820">
    <property type="entry name" value="TIMP"/>
</dbReference>
<dbReference type="InterPro" id="IPR008993">
    <property type="entry name" value="TIMP-like_OB-fold"/>
</dbReference>
<dbReference type="InterPro" id="IPR027465">
    <property type="entry name" value="TIMP_C"/>
</dbReference>
<dbReference type="InterPro" id="IPR030490">
    <property type="entry name" value="TIMP_CS"/>
</dbReference>
<dbReference type="PANTHER" id="PTHR11844">
    <property type="entry name" value="METALLOPROTEASE INHIBITOR"/>
    <property type="match status" value="1"/>
</dbReference>
<dbReference type="PANTHER" id="PTHR11844:SF22">
    <property type="entry name" value="METALLOPROTEINASE INHIBITOR 3"/>
    <property type="match status" value="1"/>
</dbReference>
<dbReference type="Pfam" id="PF00965">
    <property type="entry name" value="TIMP"/>
    <property type="match status" value="1"/>
</dbReference>
<dbReference type="SMART" id="SM00206">
    <property type="entry name" value="NTR"/>
    <property type="match status" value="1"/>
</dbReference>
<dbReference type="SUPFAM" id="SSF50242">
    <property type="entry name" value="TIMP-like"/>
    <property type="match status" value="1"/>
</dbReference>
<dbReference type="PROSITE" id="PS50189">
    <property type="entry name" value="NTR"/>
    <property type="match status" value="1"/>
</dbReference>
<dbReference type="PROSITE" id="PS00288">
    <property type="entry name" value="TIMP"/>
    <property type="match status" value="1"/>
</dbReference>
<gene>
    <name type="primary">TIMP3</name>
</gene>
<protein>
    <recommendedName>
        <fullName>Metalloproteinase inhibitor 3</fullName>
    </recommendedName>
    <alternativeName>
        <fullName>Tissue inhibitor of metalloproteinases 3</fullName>
        <shortName>TIMP-3</shortName>
    </alternativeName>
</protein>
<comment type="function">
    <text evidence="3 4">Mediates a variety of processes including matrix regulation and turnover, inflammation, and angiogenesis, through reversible inhibition of zinc protease superfamily enzymes, primarily matrix metalloproteinases (MMPs). Regulates extracellular matrix (ECM) remodeling through inhibition of matrix metalloproteinases (MMP) including MMP-1, MMP-2, MMP-3, MMP-7, MMP-9, MMP-13, MMP-14 and MMP-15. Additionally, modulates the processing of amyloid precursor protein (APP) and apolipoprotein E receptor ApoER2 by inhibiting two alpha-secretases ADAM10 and ADAM17. Functions as a tumor suppressor and a potent inhibitor of angiogenesis. Exerts its anti-angiogenic effect by directly interacting with vascular endothelial growth factor (VEGF) receptor-2/KDR, preventing its binding to the VEGFA ligand. Selectively induces apoptosis in angiogenic endothelial cells through a caspase-independent cell death pathway. Mechanistically, inhibits matrix-induced focal adhesion kinase PTK2 tyrosine phosphorylation and association with paxillin/PXN and disrupts the incorporation of ITGB3, PTK2 and PXN into focal adhesion contacts on the matrix.</text>
</comment>
<comment type="subunit">
    <text evidence="3">Interacts with EFEMP1. Interacts with KDR.</text>
</comment>
<comment type="subcellular location">
    <subcellularLocation>
        <location evidence="3">Secreted</location>
        <location evidence="3">Extracellular space</location>
        <location evidence="3">Extracellular matrix</location>
    </subcellularLocation>
</comment>
<comment type="similarity">
    <text evidence="7">Belongs to the protease inhibitor I35 (TIMP) family.</text>
</comment>
<keyword id="KW-1015">Disulfide bond</keyword>
<keyword id="KW-0272">Extracellular matrix</keyword>
<keyword id="KW-0325">Glycoprotein</keyword>
<keyword id="KW-0479">Metal-binding</keyword>
<keyword id="KW-0481">Metalloenzyme inhibitor</keyword>
<keyword id="KW-0483">Metalloprotease inhibitor</keyword>
<keyword id="KW-0646">Protease inhibitor</keyword>
<keyword id="KW-1185">Reference proteome</keyword>
<keyword id="KW-0964">Secreted</keyword>
<keyword id="KW-0732">Signal</keyword>
<keyword id="KW-0862">Zinc</keyword>
<sequence>MTPWLGLVVLLGSWSLGDWGAEACTCSPSHPQDAFCNSDIVIRAKVVGKKLVKEGPFGTLVYTIKQMKMYRGFTKMPHVQYIHTEASESLCGLKLEVNKYQYLLTGRVYDGKMYTGLCNFVERWDQLTLSQRKGLNYRYHLGCNCKIKSCYYLPCYVTSKNECLWTDMLSNFGYPGYQSKHYACIRQKGGYCSWYRGWAPPDKSIINATDP</sequence>
<name>TIMP3_HORSE</name>
<reference key="1">
    <citation type="submission" date="1999-06" db="EMBL/GenBank/DDBJ databases">
        <title>Molecular cloning and sequencing of the cDNA encoding equine tissue inhibitor of metalloproteinase-3 (TIMP-3).</title>
        <authorList>
            <person name="Kyaw-Tanner M.T."/>
            <person name="Mungall B.A."/>
            <person name="Pollitt C.C."/>
        </authorList>
    </citation>
    <scope>NUCLEOTIDE SEQUENCE [MRNA]</scope>
</reference>
<evidence type="ECO:0000250" key="1"/>
<evidence type="ECO:0000250" key="2">
    <source>
        <dbReference type="UniProtKB" id="P16035"/>
    </source>
</evidence>
<evidence type="ECO:0000250" key="3">
    <source>
        <dbReference type="UniProtKB" id="P35625"/>
    </source>
</evidence>
<evidence type="ECO:0000250" key="4">
    <source>
        <dbReference type="UniProtKB" id="P39876"/>
    </source>
</evidence>
<evidence type="ECO:0000255" key="5"/>
<evidence type="ECO:0000255" key="6">
    <source>
        <dbReference type="PROSITE-ProRule" id="PRU00295"/>
    </source>
</evidence>
<evidence type="ECO:0000305" key="7"/>
<proteinExistence type="evidence at transcript level"/>